<evidence type="ECO:0000255" key="1"/>
<evidence type="ECO:0000305" key="2"/>
<organism>
    <name type="scientific">Buchnera aphidicola subsp. Tetraneura caerulescens</name>
    <dbReference type="NCBI Taxonomy" id="118111"/>
    <lineage>
        <taxon>Bacteria</taxon>
        <taxon>Pseudomonadati</taxon>
        <taxon>Pseudomonadota</taxon>
        <taxon>Gammaproteobacteria</taxon>
        <taxon>Enterobacterales</taxon>
        <taxon>Erwiniaceae</taxon>
        <taxon>Buchnera</taxon>
    </lineage>
</organism>
<feature type="chain" id="PRO_0000214389" description="UPF0114 protein in repA1-repA2 intergenic region">
    <location>
        <begin position="1"/>
        <end position="178"/>
    </location>
</feature>
<feature type="transmembrane region" description="Helical" evidence="1">
    <location>
        <begin position="14"/>
        <end position="34"/>
    </location>
</feature>
<feature type="transmembrane region" description="Helical" evidence="1">
    <location>
        <begin position="53"/>
        <end position="73"/>
    </location>
</feature>
<feature type="transmembrane region" description="Helical" evidence="1">
    <location>
        <begin position="136"/>
        <end position="156"/>
    </location>
</feature>
<proteinExistence type="inferred from homology"/>
<name>YREP_BUCTC</name>
<keyword id="KW-1003">Cell membrane</keyword>
<keyword id="KW-0472">Membrane</keyword>
<keyword id="KW-0614">Plasmid</keyword>
<keyword id="KW-0812">Transmembrane</keyword>
<keyword id="KW-1133">Transmembrane helix</keyword>
<reference key="1">
    <citation type="journal article" date="1997" name="J. Bacteriol.">
        <title>Putative evolutionary origin of plasmids carrying the genes involved in leucine biosynthesis in Buchnera aphidicola (endosymbiont of aphids).</title>
        <authorList>
            <person name="van Ham R.C.H.J."/>
            <person name="Moya A."/>
            <person name="Latorre A."/>
        </authorList>
    </citation>
    <scope>NUCLEOTIDE SEQUENCE [GENOMIC DNA]</scope>
</reference>
<protein>
    <recommendedName>
        <fullName>UPF0114 protein in repA1-repA2 intergenic region</fullName>
    </recommendedName>
</protein>
<geneLocation type="plasmid">
    <name>pBTc1</name>
</geneLocation>
<dbReference type="EMBL" id="Y11974">
    <property type="protein sequence ID" value="CAA72708.1"/>
    <property type="molecule type" value="Genomic_DNA"/>
</dbReference>
<dbReference type="GO" id="GO:0005886">
    <property type="term" value="C:plasma membrane"/>
    <property type="evidence" value="ECO:0007669"/>
    <property type="project" value="UniProtKB-SubCell"/>
</dbReference>
<dbReference type="HAMAP" id="MF_00143">
    <property type="entry name" value="UPF0114"/>
    <property type="match status" value="1"/>
</dbReference>
<dbReference type="InterPro" id="IPR005134">
    <property type="entry name" value="UPF0114"/>
</dbReference>
<dbReference type="InterPro" id="IPR020761">
    <property type="entry name" value="UPF0114_bac"/>
</dbReference>
<dbReference type="NCBIfam" id="TIGR00645">
    <property type="entry name" value="HI0507"/>
    <property type="match status" value="1"/>
</dbReference>
<dbReference type="PANTHER" id="PTHR38596">
    <property type="entry name" value="UPF0114 PROTEIN YQHA"/>
    <property type="match status" value="1"/>
</dbReference>
<dbReference type="PANTHER" id="PTHR38596:SF1">
    <property type="entry name" value="UPF0114 PROTEIN YQHA"/>
    <property type="match status" value="1"/>
</dbReference>
<dbReference type="Pfam" id="PF03350">
    <property type="entry name" value="UPF0114"/>
    <property type="match status" value="1"/>
</dbReference>
<comment type="subcellular location">
    <subcellularLocation>
        <location evidence="2">Cell membrane</location>
        <topology evidence="2">Multi-pass membrane protein</topology>
    </subcellularLocation>
</comment>
<comment type="similarity">
    <text evidence="2">Belongs to the UPF0114 family.</text>
</comment>
<accession>O31285</accession>
<sequence length="178" mass="20332">MKNIIEKMIYISRWLIFPIYLGLSFCLILLTLKFFQLVFFIFPEIFFISESGLILVILSLIDIVLVGGLLVMVMFSGYENFISKMNIEGDKLGWMGTMDVNSIKNKVSSAIVAISSVHLLRVFMETEKVSNEKIVWYVIIHLTFVVSAGGMAYIDRLNKSNINSSTRKCSVLVNRRKK</sequence>